<keyword id="KW-0137">Centromere</keyword>
<keyword id="KW-0158">Chromosome</keyword>
<keyword id="KW-0539">Nucleus</keyword>
<keyword id="KW-1185">Reference proteome</keyword>
<keyword id="KW-0832">Ubl conjugation</keyword>
<dbReference type="EMBL" id="AK043344">
    <property type="protein sequence ID" value="BAC31525.1"/>
    <property type="molecule type" value="mRNA"/>
</dbReference>
<dbReference type="EMBL" id="BC030328">
    <property type="protein sequence ID" value="AAH30328.1"/>
    <property type="molecule type" value="mRNA"/>
</dbReference>
<dbReference type="CCDS" id="CCDS30393.1"/>
<dbReference type="RefSeq" id="NP_001292560.1">
    <property type="nucleotide sequence ID" value="NM_001305631.1"/>
</dbReference>
<dbReference type="RefSeq" id="NP_666036.1">
    <property type="nucleotide sequence ID" value="NM_145924.3"/>
</dbReference>
<dbReference type="RefSeq" id="XP_017173829.1">
    <property type="nucleotide sequence ID" value="XM_017318340.2"/>
</dbReference>
<dbReference type="RefSeq" id="XP_017173830.1">
    <property type="nucleotide sequence ID" value="XM_017318341.1"/>
</dbReference>
<dbReference type="SMR" id="Q8K1K4"/>
<dbReference type="BioGRID" id="221978">
    <property type="interactions" value="30"/>
</dbReference>
<dbReference type="ComplexPortal" id="CPX-5704">
    <property type="entry name" value="Kinetochore CCAN complex"/>
</dbReference>
<dbReference type="FunCoup" id="Q8K1K4">
    <property type="interactions" value="1259"/>
</dbReference>
<dbReference type="IntAct" id="Q8K1K4">
    <property type="interactions" value="4"/>
</dbReference>
<dbReference type="MINT" id="Q8K1K4"/>
<dbReference type="STRING" id="10090.ENSMUSP00000079851"/>
<dbReference type="iPTMnet" id="Q8K1K4"/>
<dbReference type="PhosphoSitePlus" id="Q8K1K4"/>
<dbReference type="PaxDb" id="10090-ENSMUSP00000079851"/>
<dbReference type="ProteomicsDB" id="281581"/>
<dbReference type="Pumba" id="Q8K1K4"/>
<dbReference type="Antibodypedia" id="28595">
    <property type="antibodies" value="155 antibodies from 27 providers"/>
</dbReference>
<dbReference type="Ensembl" id="ENSMUST00000081064.12">
    <property type="protein sequence ID" value="ENSMUSP00000079851.6"/>
    <property type="gene ID" value="ENSMUSG00000031262.13"/>
</dbReference>
<dbReference type="Ensembl" id="ENSMUST00000101251.8">
    <property type="protein sequence ID" value="ENSMUSP00000098809.2"/>
    <property type="gene ID" value="ENSMUSG00000031262.13"/>
</dbReference>
<dbReference type="GeneID" id="102920"/>
<dbReference type="KEGG" id="mmu:102920"/>
<dbReference type="UCSC" id="uc009ufu.2">
    <property type="organism name" value="mouse"/>
</dbReference>
<dbReference type="AGR" id="MGI:2147897"/>
<dbReference type="CTD" id="2491"/>
<dbReference type="MGI" id="MGI:2147897">
    <property type="gene designation" value="Cenpi"/>
</dbReference>
<dbReference type="VEuPathDB" id="HostDB:ENSMUSG00000031262"/>
<dbReference type="eggNOG" id="ENOG502QU9H">
    <property type="taxonomic scope" value="Eukaryota"/>
</dbReference>
<dbReference type="GeneTree" id="ENSGT00390000013235"/>
<dbReference type="HOGENOM" id="CLU_022189_0_0_1"/>
<dbReference type="InParanoid" id="Q8K1K4"/>
<dbReference type="OMA" id="RVFKNYY"/>
<dbReference type="OrthoDB" id="6347512at2759"/>
<dbReference type="PhylomeDB" id="Q8K1K4"/>
<dbReference type="TreeFam" id="TF101137"/>
<dbReference type="Reactome" id="R-MMU-141444">
    <property type="pathway name" value="Amplification of signal from unattached kinetochores via a MAD2 inhibitory signal"/>
</dbReference>
<dbReference type="Reactome" id="R-MMU-2467813">
    <property type="pathway name" value="Separation of Sister Chromatids"/>
</dbReference>
<dbReference type="Reactome" id="R-MMU-2500257">
    <property type="pathway name" value="Resolution of Sister Chromatid Cohesion"/>
</dbReference>
<dbReference type="Reactome" id="R-MMU-5663220">
    <property type="pathway name" value="RHO GTPases Activate Formins"/>
</dbReference>
<dbReference type="Reactome" id="R-MMU-606279">
    <property type="pathway name" value="Deposition of new CENPA-containing nucleosomes at the centromere"/>
</dbReference>
<dbReference type="Reactome" id="R-MMU-68877">
    <property type="pathway name" value="Mitotic Prometaphase"/>
</dbReference>
<dbReference type="Reactome" id="R-MMU-9648025">
    <property type="pathway name" value="EML4 and NUDC in mitotic spindle formation"/>
</dbReference>
<dbReference type="BioGRID-ORCS" id="102920">
    <property type="hits" value="22 hits in 63 CRISPR screens"/>
</dbReference>
<dbReference type="ChiTaRS" id="Cenpi">
    <property type="organism name" value="mouse"/>
</dbReference>
<dbReference type="PRO" id="PR:Q8K1K4"/>
<dbReference type="Proteomes" id="UP000000589">
    <property type="component" value="Chromosome X"/>
</dbReference>
<dbReference type="RNAct" id="Q8K1K4">
    <property type="molecule type" value="protein"/>
</dbReference>
<dbReference type="Bgee" id="ENSMUSG00000031262">
    <property type="expression patterns" value="Expressed in manus and 138 other cell types or tissues"/>
</dbReference>
<dbReference type="ExpressionAtlas" id="Q8K1K4">
    <property type="expression patterns" value="baseline and differential"/>
</dbReference>
<dbReference type="GO" id="GO:0000939">
    <property type="term" value="C:inner kinetochore"/>
    <property type="evidence" value="ECO:0000266"/>
    <property type="project" value="ComplexPortal"/>
</dbReference>
<dbReference type="GO" id="GO:0016604">
    <property type="term" value="C:nuclear body"/>
    <property type="evidence" value="ECO:0007669"/>
    <property type="project" value="Ensembl"/>
</dbReference>
<dbReference type="GO" id="GO:0005634">
    <property type="term" value="C:nucleus"/>
    <property type="evidence" value="ECO:0000303"/>
    <property type="project" value="ComplexPortal"/>
</dbReference>
<dbReference type="GO" id="GO:0034508">
    <property type="term" value="P:centromere complex assembly"/>
    <property type="evidence" value="ECO:0007669"/>
    <property type="project" value="InterPro"/>
</dbReference>
<dbReference type="GO" id="GO:0007059">
    <property type="term" value="P:chromosome segregation"/>
    <property type="evidence" value="ECO:0000303"/>
    <property type="project" value="ComplexPortal"/>
</dbReference>
<dbReference type="InterPro" id="IPR012485">
    <property type="entry name" value="CENP-I"/>
</dbReference>
<dbReference type="PANTHER" id="PTHR48208">
    <property type="entry name" value="CENTROMERE PROTEIN I"/>
    <property type="match status" value="1"/>
</dbReference>
<dbReference type="PANTHER" id="PTHR48208:SF2">
    <property type="entry name" value="CENTROMERE PROTEIN I"/>
    <property type="match status" value="1"/>
</dbReference>
<dbReference type="Pfam" id="PF07778">
    <property type="entry name" value="CENP-I"/>
    <property type="match status" value="1"/>
</dbReference>
<sequence>MATQRVTRNSQQQNRISQGSNSRQTSLLDWMVKDKSGNFKSVLKESSSVEDSTRTDDRTEGALQVAVGYFQKGPKKASLSKDKVLEKHLTTVENVALSNGLAPEAIDILLNVALSGKFGNAVNSRILKCMIPESHISEDSVLKAVSWLCVDKCSGNTKVLFYRWLVAMFDFIDHKKQISSLYGFFFASLQDDTLCPYVCHLLYLLTKRENVKPFRVRKLLDLQAKMGMQPHLQALLSLYKFFAPTLISVSLPVRKKIFFNNSKNLWTSASLAVRLRNQGAFPEPLNLPLRPTTGRSLKRKWNSHSVIPALNSANKEYGEKTASLFDYLSSERSLPLEQLQRFPQLLESIHCLELPSQMCSVLNSPLLLHYINCVKDESILLRISYWLSQALQEECVWYNINNYEQEKEFINFLDLVIRVQCFLQEGFYSCEAFLYKSLPLWDGSSCRSQYLQLLAWIPFSSFSEVKPLLSDHLAPLFFTSSIYFKCSVLQSLQELLQNWLLWLSTDAHVQPTTDSPLETTLGGSMSSVSQLIEYTGWLCVVAMRLESSSTLLLHFILDFYEKVCDIYINYDLPIVVLFPPVIFHSALLSLDATILNQLCYIMYRYRNNWTAAKKNRYLQKAKPEFSLSSKICKEYNYYLTAMVCCLWTSRPFKAGVYTDPETIENTGGTQYKSTLNIVYHPSLLSYAASFLLQESPEEMTEHLSSIQGKKWNWYLDYLYSEGFQGLKLFIKSSVHSSVPKPEENTE</sequence>
<gene>
    <name type="primary">Cenpi</name>
    <name type="synonym">Fshprh1</name>
</gene>
<comment type="function">
    <text evidence="1">Component of the CENPA-CAD (nucleosome distal) complex, a complex recruited to centromeres which is involved in assembly of kinetochore proteins, mitotic progression and chromosome segregation. May be involved in incorporation of newly synthesized CENPA into centromeres via its interaction with the CENPA-NAC complex. Required for the localization of CENPF, MAD1L1 and MAD2 (MAD2L1 or MAD2L2) to kinetochores. Involved in the response of gonadal tissues to follicle-stimulating hormone (By similarity).</text>
</comment>
<comment type="subunit">
    <text evidence="1">Component of the CENPA-CAD complex, composed of CENPI, CENPK, CENPL, CENPO, CENPP, CENPQ, CENPR and CENPS. The CENPA-CAD complex interacts with the CENPA-NAC complex, at least composed of CENPA, CENPC, CENPH, CENPM, CENPN, CENPT and CENPU. Interacts with SENP6 (By similarity).</text>
</comment>
<comment type="subcellular location">
    <subcellularLocation>
        <location evidence="1">Nucleus</location>
    </subcellularLocation>
    <subcellularLocation>
        <location evidence="1">Chromosome</location>
        <location evidence="1">Centromere</location>
    </subcellularLocation>
    <text evidence="1">Localizes exclusively in the centromeres. The CENPA-CAD complex is probably recruited on centromeres by the CENPA-NAC complex (By similarity).</text>
</comment>
<comment type="PTM">
    <text evidence="1">Sumoylated. Sumoylated form can be polyubiquitinated by RNF4, leading to its degradation. Desumoylation by SENP6 prevents its degradation (By similarity).</text>
</comment>
<comment type="similarity">
    <text evidence="3">Belongs to the CENP-I/CTF3 family.</text>
</comment>
<feature type="chain" id="PRO_0000087355" description="Centromere protein I">
    <location>
        <begin position="1"/>
        <end position="746"/>
    </location>
</feature>
<feature type="region of interest" description="Disordered" evidence="2">
    <location>
        <begin position="1"/>
        <end position="24"/>
    </location>
</feature>
<feature type="sequence conflict" description="In Ref. 1; BAC31525." evidence="3" ref="1">
    <original>V</original>
    <variation>D</variation>
    <location>
        <position position="42"/>
    </location>
</feature>
<feature type="sequence conflict" description="In Ref. 1; BAC31525." evidence="3" ref="1">
    <original>I</original>
    <variation>V</variation>
    <location>
        <position position="566"/>
    </location>
</feature>
<accession>Q8K1K4</accession>
<accession>Q8BXU9</accession>
<proteinExistence type="evidence at transcript level"/>
<evidence type="ECO:0000250" key="1"/>
<evidence type="ECO:0000256" key="2">
    <source>
        <dbReference type="SAM" id="MobiDB-lite"/>
    </source>
</evidence>
<evidence type="ECO:0000305" key="3"/>
<protein>
    <recommendedName>
        <fullName>Centromere protein I</fullName>
        <shortName>CENP-I</shortName>
    </recommendedName>
    <alternativeName>
        <fullName>FSH primary response protein 1</fullName>
    </alternativeName>
    <alternativeName>
        <fullName>Follicle-stimulating hormone primary response protein</fullName>
    </alternativeName>
</protein>
<name>CENPI_MOUSE</name>
<organism>
    <name type="scientific">Mus musculus</name>
    <name type="common">Mouse</name>
    <dbReference type="NCBI Taxonomy" id="10090"/>
    <lineage>
        <taxon>Eukaryota</taxon>
        <taxon>Metazoa</taxon>
        <taxon>Chordata</taxon>
        <taxon>Craniata</taxon>
        <taxon>Vertebrata</taxon>
        <taxon>Euteleostomi</taxon>
        <taxon>Mammalia</taxon>
        <taxon>Eutheria</taxon>
        <taxon>Euarchontoglires</taxon>
        <taxon>Glires</taxon>
        <taxon>Rodentia</taxon>
        <taxon>Myomorpha</taxon>
        <taxon>Muroidea</taxon>
        <taxon>Muridae</taxon>
        <taxon>Murinae</taxon>
        <taxon>Mus</taxon>
        <taxon>Mus</taxon>
    </lineage>
</organism>
<reference key="1">
    <citation type="journal article" date="2005" name="Science">
        <title>The transcriptional landscape of the mammalian genome.</title>
        <authorList>
            <person name="Carninci P."/>
            <person name="Kasukawa T."/>
            <person name="Katayama S."/>
            <person name="Gough J."/>
            <person name="Frith M.C."/>
            <person name="Maeda N."/>
            <person name="Oyama R."/>
            <person name="Ravasi T."/>
            <person name="Lenhard B."/>
            <person name="Wells C."/>
            <person name="Kodzius R."/>
            <person name="Shimokawa K."/>
            <person name="Bajic V.B."/>
            <person name="Brenner S.E."/>
            <person name="Batalov S."/>
            <person name="Forrest A.R."/>
            <person name="Zavolan M."/>
            <person name="Davis M.J."/>
            <person name="Wilming L.G."/>
            <person name="Aidinis V."/>
            <person name="Allen J.E."/>
            <person name="Ambesi-Impiombato A."/>
            <person name="Apweiler R."/>
            <person name="Aturaliya R.N."/>
            <person name="Bailey T.L."/>
            <person name="Bansal M."/>
            <person name="Baxter L."/>
            <person name="Beisel K.W."/>
            <person name="Bersano T."/>
            <person name="Bono H."/>
            <person name="Chalk A.M."/>
            <person name="Chiu K.P."/>
            <person name="Choudhary V."/>
            <person name="Christoffels A."/>
            <person name="Clutterbuck D.R."/>
            <person name="Crowe M.L."/>
            <person name="Dalla E."/>
            <person name="Dalrymple B.P."/>
            <person name="de Bono B."/>
            <person name="Della Gatta G."/>
            <person name="di Bernardo D."/>
            <person name="Down T."/>
            <person name="Engstrom P."/>
            <person name="Fagiolini M."/>
            <person name="Faulkner G."/>
            <person name="Fletcher C.F."/>
            <person name="Fukushima T."/>
            <person name="Furuno M."/>
            <person name="Futaki S."/>
            <person name="Gariboldi M."/>
            <person name="Georgii-Hemming P."/>
            <person name="Gingeras T.R."/>
            <person name="Gojobori T."/>
            <person name="Green R.E."/>
            <person name="Gustincich S."/>
            <person name="Harbers M."/>
            <person name="Hayashi Y."/>
            <person name="Hensch T.K."/>
            <person name="Hirokawa N."/>
            <person name="Hill D."/>
            <person name="Huminiecki L."/>
            <person name="Iacono M."/>
            <person name="Ikeo K."/>
            <person name="Iwama A."/>
            <person name="Ishikawa T."/>
            <person name="Jakt M."/>
            <person name="Kanapin A."/>
            <person name="Katoh M."/>
            <person name="Kawasawa Y."/>
            <person name="Kelso J."/>
            <person name="Kitamura H."/>
            <person name="Kitano H."/>
            <person name="Kollias G."/>
            <person name="Krishnan S.P."/>
            <person name="Kruger A."/>
            <person name="Kummerfeld S.K."/>
            <person name="Kurochkin I.V."/>
            <person name="Lareau L.F."/>
            <person name="Lazarevic D."/>
            <person name="Lipovich L."/>
            <person name="Liu J."/>
            <person name="Liuni S."/>
            <person name="McWilliam S."/>
            <person name="Madan Babu M."/>
            <person name="Madera M."/>
            <person name="Marchionni L."/>
            <person name="Matsuda H."/>
            <person name="Matsuzawa S."/>
            <person name="Miki H."/>
            <person name="Mignone F."/>
            <person name="Miyake S."/>
            <person name="Morris K."/>
            <person name="Mottagui-Tabar S."/>
            <person name="Mulder N."/>
            <person name="Nakano N."/>
            <person name="Nakauchi H."/>
            <person name="Ng P."/>
            <person name="Nilsson R."/>
            <person name="Nishiguchi S."/>
            <person name="Nishikawa S."/>
            <person name="Nori F."/>
            <person name="Ohara O."/>
            <person name="Okazaki Y."/>
            <person name="Orlando V."/>
            <person name="Pang K.C."/>
            <person name="Pavan W.J."/>
            <person name="Pavesi G."/>
            <person name="Pesole G."/>
            <person name="Petrovsky N."/>
            <person name="Piazza S."/>
            <person name="Reed J."/>
            <person name="Reid J.F."/>
            <person name="Ring B.Z."/>
            <person name="Ringwald M."/>
            <person name="Rost B."/>
            <person name="Ruan Y."/>
            <person name="Salzberg S.L."/>
            <person name="Sandelin A."/>
            <person name="Schneider C."/>
            <person name="Schoenbach C."/>
            <person name="Sekiguchi K."/>
            <person name="Semple C.A."/>
            <person name="Seno S."/>
            <person name="Sessa L."/>
            <person name="Sheng Y."/>
            <person name="Shibata Y."/>
            <person name="Shimada H."/>
            <person name="Shimada K."/>
            <person name="Silva D."/>
            <person name="Sinclair B."/>
            <person name="Sperling S."/>
            <person name="Stupka E."/>
            <person name="Sugiura K."/>
            <person name="Sultana R."/>
            <person name="Takenaka Y."/>
            <person name="Taki K."/>
            <person name="Tammoja K."/>
            <person name="Tan S.L."/>
            <person name="Tang S."/>
            <person name="Taylor M.S."/>
            <person name="Tegner J."/>
            <person name="Teichmann S.A."/>
            <person name="Ueda H.R."/>
            <person name="van Nimwegen E."/>
            <person name="Verardo R."/>
            <person name="Wei C.L."/>
            <person name="Yagi K."/>
            <person name="Yamanishi H."/>
            <person name="Zabarovsky E."/>
            <person name="Zhu S."/>
            <person name="Zimmer A."/>
            <person name="Hide W."/>
            <person name="Bult C."/>
            <person name="Grimmond S.M."/>
            <person name="Teasdale R.D."/>
            <person name="Liu E.T."/>
            <person name="Brusic V."/>
            <person name="Quackenbush J."/>
            <person name="Wahlestedt C."/>
            <person name="Mattick J.S."/>
            <person name="Hume D.A."/>
            <person name="Kai C."/>
            <person name="Sasaki D."/>
            <person name="Tomaru Y."/>
            <person name="Fukuda S."/>
            <person name="Kanamori-Katayama M."/>
            <person name="Suzuki M."/>
            <person name="Aoki J."/>
            <person name="Arakawa T."/>
            <person name="Iida J."/>
            <person name="Imamura K."/>
            <person name="Itoh M."/>
            <person name="Kato T."/>
            <person name="Kawaji H."/>
            <person name="Kawagashira N."/>
            <person name="Kawashima T."/>
            <person name="Kojima M."/>
            <person name="Kondo S."/>
            <person name="Konno H."/>
            <person name="Nakano K."/>
            <person name="Ninomiya N."/>
            <person name="Nishio T."/>
            <person name="Okada M."/>
            <person name="Plessy C."/>
            <person name="Shibata K."/>
            <person name="Shiraki T."/>
            <person name="Suzuki S."/>
            <person name="Tagami M."/>
            <person name="Waki K."/>
            <person name="Watahiki A."/>
            <person name="Okamura-Oho Y."/>
            <person name="Suzuki H."/>
            <person name="Kawai J."/>
            <person name="Hayashizaki Y."/>
        </authorList>
    </citation>
    <scope>NUCLEOTIDE SEQUENCE [LARGE SCALE MRNA]</scope>
    <source>
        <strain>C57BL/6J</strain>
        <tissue>Cerebellum</tissue>
    </source>
</reference>
<reference key="2">
    <citation type="journal article" date="2004" name="Genome Res.">
        <title>The status, quality, and expansion of the NIH full-length cDNA project: the Mammalian Gene Collection (MGC).</title>
        <authorList>
            <consortium name="The MGC Project Team"/>
        </authorList>
    </citation>
    <scope>NUCLEOTIDE SEQUENCE [LARGE SCALE MRNA]</scope>
    <source>
        <strain>FVB/N-3</strain>
        <tissue>Mammary tumor</tissue>
    </source>
</reference>